<proteinExistence type="inferred from homology"/>
<name>RL23_CLOAB</name>
<reference key="1">
    <citation type="journal article" date="2001" name="J. Bacteriol.">
        <title>Genome sequence and comparative analysis of the solvent-producing bacterium Clostridium acetobutylicum.</title>
        <authorList>
            <person name="Noelling J."/>
            <person name="Breton G."/>
            <person name="Omelchenko M.V."/>
            <person name="Makarova K.S."/>
            <person name="Zeng Q."/>
            <person name="Gibson R."/>
            <person name="Lee H.M."/>
            <person name="Dubois J."/>
            <person name="Qiu D."/>
            <person name="Hitti J."/>
            <person name="Wolf Y.I."/>
            <person name="Tatusov R.L."/>
            <person name="Sabathe F."/>
            <person name="Doucette-Stamm L.A."/>
            <person name="Soucaille P."/>
            <person name="Daly M.J."/>
            <person name="Bennett G.N."/>
            <person name="Koonin E.V."/>
            <person name="Smith D.R."/>
        </authorList>
    </citation>
    <scope>NUCLEOTIDE SEQUENCE [LARGE SCALE GENOMIC DNA]</scope>
    <source>
        <strain>ATCC 824 / DSM 792 / JCM 1419 / IAM 19013 / LMG 5710 / NBRC 13948 / NRRL B-527 / VKM B-1787 / 2291 / W</strain>
    </source>
</reference>
<keyword id="KW-1185">Reference proteome</keyword>
<keyword id="KW-0687">Ribonucleoprotein</keyword>
<keyword id="KW-0689">Ribosomal protein</keyword>
<keyword id="KW-0694">RNA-binding</keyword>
<keyword id="KW-0699">rRNA-binding</keyword>
<feature type="chain" id="PRO_1000068062" description="Large ribosomal subunit protein uL23">
    <location>
        <begin position="1"/>
        <end position="98"/>
    </location>
</feature>
<accession>Q97EI0</accession>
<dbReference type="EMBL" id="AE001437">
    <property type="protein sequence ID" value="AAK81070.1"/>
    <property type="molecule type" value="Genomic_DNA"/>
</dbReference>
<dbReference type="PIR" id="C97285">
    <property type="entry name" value="C97285"/>
</dbReference>
<dbReference type="RefSeq" id="NP_349730.1">
    <property type="nucleotide sequence ID" value="NC_003030.1"/>
</dbReference>
<dbReference type="RefSeq" id="WP_010966410.1">
    <property type="nucleotide sequence ID" value="NC_003030.1"/>
</dbReference>
<dbReference type="SMR" id="Q97EI0"/>
<dbReference type="STRING" id="272562.CA_C3131"/>
<dbReference type="GeneID" id="44999618"/>
<dbReference type="KEGG" id="cac:CA_C3131"/>
<dbReference type="PATRIC" id="fig|272562.8.peg.3314"/>
<dbReference type="eggNOG" id="COG0089">
    <property type="taxonomic scope" value="Bacteria"/>
</dbReference>
<dbReference type="HOGENOM" id="CLU_037562_3_2_9"/>
<dbReference type="OrthoDB" id="9793353at2"/>
<dbReference type="Proteomes" id="UP000000814">
    <property type="component" value="Chromosome"/>
</dbReference>
<dbReference type="GO" id="GO:1990904">
    <property type="term" value="C:ribonucleoprotein complex"/>
    <property type="evidence" value="ECO:0007669"/>
    <property type="project" value="UniProtKB-KW"/>
</dbReference>
<dbReference type="GO" id="GO:0005840">
    <property type="term" value="C:ribosome"/>
    <property type="evidence" value="ECO:0007669"/>
    <property type="project" value="UniProtKB-KW"/>
</dbReference>
<dbReference type="GO" id="GO:0019843">
    <property type="term" value="F:rRNA binding"/>
    <property type="evidence" value="ECO:0007669"/>
    <property type="project" value="UniProtKB-UniRule"/>
</dbReference>
<dbReference type="GO" id="GO:0003735">
    <property type="term" value="F:structural constituent of ribosome"/>
    <property type="evidence" value="ECO:0007669"/>
    <property type="project" value="InterPro"/>
</dbReference>
<dbReference type="GO" id="GO:0006412">
    <property type="term" value="P:translation"/>
    <property type="evidence" value="ECO:0007669"/>
    <property type="project" value="UniProtKB-UniRule"/>
</dbReference>
<dbReference type="FunFam" id="3.30.70.330:FF:000001">
    <property type="entry name" value="50S ribosomal protein L23"/>
    <property type="match status" value="1"/>
</dbReference>
<dbReference type="Gene3D" id="3.30.70.330">
    <property type="match status" value="1"/>
</dbReference>
<dbReference type="HAMAP" id="MF_01369_B">
    <property type="entry name" value="Ribosomal_uL23_B"/>
    <property type="match status" value="1"/>
</dbReference>
<dbReference type="InterPro" id="IPR012677">
    <property type="entry name" value="Nucleotide-bd_a/b_plait_sf"/>
</dbReference>
<dbReference type="InterPro" id="IPR013025">
    <property type="entry name" value="Ribosomal_uL23-like"/>
</dbReference>
<dbReference type="InterPro" id="IPR012678">
    <property type="entry name" value="Ribosomal_uL23/eL15/eS24_sf"/>
</dbReference>
<dbReference type="InterPro" id="IPR001014">
    <property type="entry name" value="Ribosomal_uL23_CS"/>
</dbReference>
<dbReference type="NCBIfam" id="NF004363">
    <property type="entry name" value="PRK05738.2-4"/>
    <property type="match status" value="1"/>
</dbReference>
<dbReference type="PANTHER" id="PTHR11620">
    <property type="entry name" value="60S RIBOSOMAL PROTEIN L23A"/>
    <property type="match status" value="1"/>
</dbReference>
<dbReference type="Pfam" id="PF00276">
    <property type="entry name" value="Ribosomal_L23"/>
    <property type="match status" value="1"/>
</dbReference>
<dbReference type="SUPFAM" id="SSF54189">
    <property type="entry name" value="Ribosomal proteins S24e, L23 and L15e"/>
    <property type="match status" value="1"/>
</dbReference>
<dbReference type="PROSITE" id="PS00050">
    <property type="entry name" value="RIBOSOMAL_L23"/>
    <property type="match status" value="1"/>
</dbReference>
<organism>
    <name type="scientific">Clostridium acetobutylicum (strain ATCC 824 / DSM 792 / JCM 1419 / IAM 19013 / LMG 5710 / NBRC 13948 / NRRL B-527 / VKM B-1787 / 2291 / W)</name>
    <dbReference type="NCBI Taxonomy" id="272562"/>
    <lineage>
        <taxon>Bacteria</taxon>
        <taxon>Bacillati</taxon>
        <taxon>Bacillota</taxon>
        <taxon>Clostridia</taxon>
        <taxon>Eubacteriales</taxon>
        <taxon>Clostridiaceae</taxon>
        <taxon>Clostridium</taxon>
    </lineage>
</organism>
<evidence type="ECO:0000255" key="1">
    <source>
        <dbReference type="HAMAP-Rule" id="MF_01369"/>
    </source>
</evidence>
<evidence type="ECO:0000305" key="2"/>
<sequence>MYTNSHDIIRKPVITEKSMAEMADKKYTFIVDPHANKVQIKKAIEEVFGVKVEKVNTSNILGKTKRVGVHVGKRADYKKAIVKLTEDSKAIEFFEGMQ</sequence>
<comment type="function">
    <text evidence="1">One of the early assembly proteins it binds 23S rRNA. One of the proteins that surrounds the polypeptide exit tunnel on the outside of the ribosome. Forms the main docking site for trigger factor binding to the ribosome.</text>
</comment>
<comment type="subunit">
    <text evidence="1">Part of the 50S ribosomal subunit. Contacts protein L29, and trigger factor when it is bound to the ribosome.</text>
</comment>
<comment type="similarity">
    <text evidence="1">Belongs to the universal ribosomal protein uL23 family.</text>
</comment>
<gene>
    <name evidence="1" type="primary">rplW</name>
    <name type="ordered locus">CA_C3131</name>
</gene>
<protein>
    <recommendedName>
        <fullName evidence="1">Large ribosomal subunit protein uL23</fullName>
    </recommendedName>
    <alternativeName>
        <fullName evidence="2">50S ribosomal protein L23</fullName>
    </alternativeName>
</protein>